<reference key="1">
    <citation type="journal article" date="2008" name="J. Bacteriol.">
        <title>Complete genome sequence of the soil actinomycete Kocuria rhizophila.</title>
        <authorList>
            <person name="Takarada H."/>
            <person name="Sekine M."/>
            <person name="Kosugi H."/>
            <person name="Matsuo Y."/>
            <person name="Fujisawa T."/>
            <person name="Omata S."/>
            <person name="Kishi E."/>
            <person name="Shimizu A."/>
            <person name="Tsukatani N."/>
            <person name="Tanikawa S."/>
            <person name="Fujita N."/>
            <person name="Harayama S."/>
        </authorList>
    </citation>
    <scope>NUCLEOTIDE SEQUENCE [LARGE SCALE GENOMIC DNA]</scope>
    <source>
        <strain>ATCC 9341 / DSM 348 / NBRC 103217 / DC2201</strain>
    </source>
</reference>
<proteinExistence type="inferred from homology"/>
<accession>B2GLY7</accession>
<comment type="function">
    <text evidence="1">F(1)F(0) ATP synthase produces ATP from ADP in the presence of a proton or sodium gradient. F-type ATPases consist of two structural domains, F(1) containing the extramembraneous catalytic core and F(0) containing the membrane proton channel, linked together by a central stalk and a peripheral stalk. During catalysis, ATP synthesis in the catalytic domain of F(1) is coupled via a rotary mechanism of the central stalk subunits to proton translocation.</text>
</comment>
<comment type="function">
    <text evidence="1">This protein is part of the stalk that links CF(0) to CF(1). It either transmits conformational changes from CF(0) to CF(1) or is implicated in proton conduction.</text>
</comment>
<comment type="subunit">
    <text evidence="1">F-type ATPases have 2 components, F(1) - the catalytic core - and F(0) - the membrane proton channel. F(1) has five subunits: alpha(3), beta(3), gamma(1), delta(1), epsilon(1). F(0) has three main subunits: a(1), b(2) and c(10-14). The alpha and beta chains form an alternating ring which encloses part of the gamma chain. F(1) is attached to F(0) by a central stalk formed by the gamma and epsilon chains, while a peripheral stalk is formed by the delta and b chains.</text>
</comment>
<comment type="subcellular location">
    <subcellularLocation>
        <location evidence="1">Cell membrane</location>
        <topology evidence="1">Peripheral membrane protein</topology>
    </subcellularLocation>
</comment>
<comment type="similarity">
    <text evidence="1">Belongs to the ATPase delta chain family.</text>
</comment>
<protein>
    <recommendedName>
        <fullName evidence="1">ATP synthase subunit delta</fullName>
    </recommendedName>
    <alternativeName>
        <fullName evidence="1">ATP synthase F(1) sector subunit delta</fullName>
    </alternativeName>
    <alternativeName>
        <fullName evidence="1">F-type ATPase subunit delta</fullName>
        <shortName evidence="1">F-ATPase subunit delta</shortName>
    </alternativeName>
</protein>
<organism>
    <name type="scientific">Kocuria rhizophila (strain ATCC 9341 / DSM 348 / NBRC 103217 / DC2201)</name>
    <dbReference type="NCBI Taxonomy" id="378753"/>
    <lineage>
        <taxon>Bacteria</taxon>
        <taxon>Bacillati</taxon>
        <taxon>Actinomycetota</taxon>
        <taxon>Actinomycetes</taxon>
        <taxon>Micrococcales</taxon>
        <taxon>Micrococcaceae</taxon>
        <taxon>Kocuria</taxon>
    </lineage>
</organism>
<feature type="chain" id="PRO_0000382106" description="ATP synthase subunit delta">
    <location>
        <begin position="1"/>
        <end position="270"/>
    </location>
</feature>
<dbReference type="EMBL" id="AP009152">
    <property type="protein sequence ID" value="BAG29328.1"/>
    <property type="molecule type" value="Genomic_DNA"/>
</dbReference>
<dbReference type="RefSeq" id="WP_012398049.1">
    <property type="nucleotide sequence ID" value="NC_010617.1"/>
</dbReference>
<dbReference type="SMR" id="B2GLY7"/>
<dbReference type="STRING" id="378753.KRH_09810"/>
<dbReference type="KEGG" id="krh:KRH_09810"/>
<dbReference type="eggNOG" id="COG0712">
    <property type="taxonomic scope" value="Bacteria"/>
</dbReference>
<dbReference type="HOGENOM" id="CLU_088880_0_0_11"/>
<dbReference type="OrthoDB" id="5242917at2"/>
<dbReference type="Proteomes" id="UP000008838">
    <property type="component" value="Chromosome"/>
</dbReference>
<dbReference type="GO" id="GO:0005886">
    <property type="term" value="C:plasma membrane"/>
    <property type="evidence" value="ECO:0007669"/>
    <property type="project" value="UniProtKB-SubCell"/>
</dbReference>
<dbReference type="GO" id="GO:0045259">
    <property type="term" value="C:proton-transporting ATP synthase complex"/>
    <property type="evidence" value="ECO:0007669"/>
    <property type="project" value="UniProtKB-KW"/>
</dbReference>
<dbReference type="GO" id="GO:0046933">
    <property type="term" value="F:proton-transporting ATP synthase activity, rotational mechanism"/>
    <property type="evidence" value="ECO:0007669"/>
    <property type="project" value="UniProtKB-UniRule"/>
</dbReference>
<dbReference type="HAMAP" id="MF_01416">
    <property type="entry name" value="ATP_synth_delta_bact"/>
    <property type="match status" value="1"/>
</dbReference>
<dbReference type="InterPro" id="IPR020781">
    <property type="entry name" value="ATPase_OSCP/d_CS"/>
</dbReference>
<dbReference type="InterPro" id="IPR000711">
    <property type="entry name" value="ATPase_OSCP/dsu"/>
</dbReference>
<dbReference type="NCBIfam" id="NF009967">
    <property type="entry name" value="PRK13430.1"/>
    <property type="match status" value="1"/>
</dbReference>
<dbReference type="PANTHER" id="PTHR11910">
    <property type="entry name" value="ATP SYNTHASE DELTA CHAIN"/>
    <property type="match status" value="1"/>
</dbReference>
<dbReference type="Pfam" id="PF00213">
    <property type="entry name" value="OSCP"/>
    <property type="match status" value="1"/>
</dbReference>
<dbReference type="PRINTS" id="PR00125">
    <property type="entry name" value="ATPASEDELTA"/>
</dbReference>
<dbReference type="PROSITE" id="PS00389">
    <property type="entry name" value="ATPASE_DELTA"/>
    <property type="match status" value="1"/>
</dbReference>
<keyword id="KW-0066">ATP synthesis</keyword>
<keyword id="KW-1003">Cell membrane</keyword>
<keyword id="KW-0139">CF(1)</keyword>
<keyword id="KW-0375">Hydrogen ion transport</keyword>
<keyword id="KW-0406">Ion transport</keyword>
<keyword id="KW-0472">Membrane</keyword>
<keyword id="KW-1185">Reference proteome</keyword>
<keyword id="KW-0813">Transport</keyword>
<sequence length="270" mass="29430">MAEASNEPYRPLTVDVDRWAAAATPEIAHQLFEIVDIVDANGALRRALTDPSRSGEDRARLVHTLLDGRANEVAVDIVAELASQRSATERQLGDGIERTAVLVAAAAAENRGGGHALEALVDDLIRFKSMLDRSADVQRAFSDSRASAEAKVTLARRLAHTESDEAALLIERAVSAPRGSLPGRLLEQFAQWVADRQQRWIARVETARPLGEEQLARLQDGLNRLYGRDLKLTTETNPSLVGGLRVQVGEEIIDGSLTHRLGQLQQRIGA</sequence>
<gene>
    <name evidence="1" type="primary">atpH</name>
    <name type="ordered locus">KRH_09810</name>
</gene>
<name>ATPD_KOCRD</name>
<evidence type="ECO:0000255" key="1">
    <source>
        <dbReference type="HAMAP-Rule" id="MF_01416"/>
    </source>
</evidence>